<dbReference type="EC" id="4.2.1.20" evidence="1"/>
<dbReference type="EMBL" id="CP001063">
    <property type="protein sequence ID" value="ACD06349.1"/>
    <property type="molecule type" value="Genomic_DNA"/>
</dbReference>
<dbReference type="RefSeq" id="WP_000443068.1">
    <property type="nucleotide sequence ID" value="NC_010658.1"/>
</dbReference>
<dbReference type="SMR" id="B2U0F1"/>
<dbReference type="STRING" id="344609.SbBS512_E1485"/>
<dbReference type="KEGG" id="sbc:SbBS512_E1485"/>
<dbReference type="HOGENOM" id="CLU_016734_0_4_6"/>
<dbReference type="UniPathway" id="UPA00035">
    <property type="reaction ID" value="UER00044"/>
</dbReference>
<dbReference type="Proteomes" id="UP000001030">
    <property type="component" value="Chromosome"/>
</dbReference>
<dbReference type="GO" id="GO:0005829">
    <property type="term" value="C:cytosol"/>
    <property type="evidence" value="ECO:0007669"/>
    <property type="project" value="TreeGrafter"/>
</dbReference>
<dbReference type="GO" id="GO:0004834">
    <property type="term" value="F:tryptophan synthase activity"/>
    <property type="evidence" value="ECO:0007669"/>
    <property type="project" value="UniProtKB-UniRule"/>
</dbReference>
<dbReference type="CDD" id="cd04724">
    <property type="entry name" value="Tryptophan_synthase_alpha"/>
    <property type="match status" value="1"/>
</dbReference>
<dbReference type="FunFam" id="3.20.20.70:FF:000037">
    <property type="entry name" value="Tryptophan synthase alpha chain"/>
    <property type="match status" value="1"/>
</dbReference>
<dbReference type="Gene3D" id="3.20.20.70">
    <property type="entry name" value="Aldolase class I"/>
    <property type="match status" value="1"/>
</dbReference>
<dbReference type="HAMAP" id="MF_00131">
    <property type="entry name" value="Trp_synth_alpha"/>
    <property type="match status" value="1"/>
</dbReference>
<dbReference type="InterPro" id="IPR013785">
    <property type="entry name" value="Aldolase_TIM"/>
</dbReference>
<dbReference type="InterPro" id="IPR011060">
    <property type="entry name" value="RibuloseP-bd_barrel"/>
</dbReference>
<dbReference type="InterPro" id="IPR018204">
    <property type="entry name" value="Trp_synthase_alpha_AS"/>
</dbReference>
<dbReference type="InterPro" id="IPR002028">
    <property type="entry name" value="Trp_synthase_suA"/>
</dbReference>
<dbReference type="NCBIfam" id="TIGR00262">
    <property type="entry name" value="trpA"/>
    <property type="match status" value="1"/>
</dbReference>
<dbReference type="PANTHER" id="PTHR43406:SF1">
    <property type="entry name" value="TRYPTOPHAN SYNTHASE ALPHA CHAIN, CHLOROPLASTIC"/>
    <property type="match status" value="1"/>
</dbReference>
<dbReference type="PANTHER" id="PTHR43406">
    <property type="entry name" value="TRYPTOPHAN SYNTHASE, ALPHA CHAIN"/>
    <property type="match status" value="1"/>
</dbReference>
<dbReference type="Pfam" id="PF00290">
    <property type="entry name" value="Trp_syntA"/>
    <property type="match status" value="1"/>
</dbReference>
<dbReference type="SUPFAM" id="SSF51366">
    <property type="entry name" value="Ribulose-phoshate binding barrel"/>
    <property type="match status" value="1"/>
</dbReference>
<dbReference type="PROSITE" id="PS00167">
    <property type="entry name" value="TRP_SYNTHASE_ALPHA"/>
    <property type="match status" value="1"/>
</dbReference>
<feature type="chain" id="PRO_1000095754" description="Tryptophan synthase alpha chain">
    <location>
        <begin position="1"/>
        <end position="268"/>
    </location>
</feature>
<feature type="active site" description="Proton acceptor" evidence="1">
    <location>
        <position position="49"/>
    </location>
</feature>
<feature type="active site" description="Proton acceptor" evidence="1">
    <location>
        <position position="60"/>
    </location>
</feature>
<sequence>MERYESLFAQLKERKEGAFVPFVTLGDPGIEQSLKIIDTLIEAGADALELGIPFSDPLADGPTIQNATLRAFAAGVTPAQCFEMLALIRQKHPTIPIGLLMYANLVFNKGIDEFYAQCEKVGVDSVLVADVPVEESAPFRQAALRHNVAPIFICPPNADDDLLRQIASYGRGYTYLLSRAGVTGAENRAALPLNHLVAKLKEYNAAPPLQGFGISAPDQVKAAIDAGAAGAISGSAIVKIIEQHINEPEKMLAALKVFVQPMKAATSS</sequence>
<comment type="function">
    <text evidence="1">The alpha subunit is responsible for the aldol cleavage of indoleglycerol phosphate to indole and glyceraldehyde 3-phosphate.</text>
</comment>
<comment type="catalytic activity">
    <reaction evidence="1">
        <text>(1S,2R)-1-C-(indol-3-yl)glycerol 3-phosphate + L-serine = D-glyceraldehyde 3-phosphate + L-tryptophan + H2O</text>
        <dbReference type="Rhea" id="RHEA:10532"/>
        <dbReference type="ChEBI" id="CHEBI:15377"/>
        <dbReference type="ChEBI" id="CHEBI:33384"/>
        <dbReference type="ChEBI" id="CHEBI:57912"/>
        <dbReference type="ChEBI" id="CHEBI:58866"/>
        <dbReference type="ChEBI" id="CHEBI:59776"/>
        <dbReference type="EC" id="4.2.1.20"/>
    </reaction>
</comment>
<comment type="pathway">
    <text evidence="1">Amino-acid biosynthesis; L-tryptophan biosynthesis; L-tryptophan from chorismate: step 5/5.</text>
</comment>
<comment type="subunit">
    <text evidence="1">Tetramer of two alpha and two beta chains.</text>
</comment>
<comment type="similarity">
    <text evidence="1">Belongs to the TrpA family.</text>
</comment>
<gene>
    <name evidence="1" type="primary">trpA</name>
    <name type="ordered locus">SbBS512_E1485</name>
</gene>
<organism>
    <name type="scientific">Shigella boydii serotype 18 (strain CDC 3083-94 / BS512)</name>
    <dbReference type="NCBI Taxonomy" id="344609"/>
    <lineage>
        <taxon>Bacteria</taxon>
        <taxon>Pseudomonadati</taxon>
        <taxon>Pseudomonadota</taxon>
        <taxon>Gammaproteobacteria</taxon>
        <taxon>Enterobacterales</taxon>
        <taxon>Enterobacteriaceae</taxon>
        <taxon>Shigella</taxon>
    </lineage>
</organism>
<evidence type="ECO:0000255" key="1">
    <source>
        <dbReference type="HAMAP-Rule" id="MF_00131"/>
    </source>
</evidence>
<reference key="1">
    <citation type="submission" date="2008-05" db="EMBL/GenBank/DDBJ databases">
        <title>Complete sequence of Shigella boydii serotype 18 strain BS512.</title>
        <authorList>
            <person name="Rasko D.A."/>
            <person name="Rosovitz M."/>
            <person name="Maurelli A.T."/>
            <person name="Myers G."/>
            <person name="Seshadri R."/>
            <person name="Cer R."/>
            <person name="Jiang L."/>
            <person name="Ravel J."/>
            <person name="Sebastian Y."/>
        </authorList>
    </citation>
    <scope>NUCLEOTIDE SEQUENCE [LARGE SCALE GENOMIC DNA]</scope>
    <source>
        <strain>CDC 3083-94 / BS512</strain>
    </source>
</reference>
<proteinExistence type="inferred from homology"/>
<keyword id="KW-0028">Amino-acid biosynthesis</keyword>
<keyword id="KW-0057">Aromatic amino acid biosynthesis</keyword>
<keyword id="KW-0456">Lyase</keyword>
<keyword id="KW-1185">Reference proteome</keyword>
<keyword id="KW-0822">Tryptophan biosynthesis</keyword>
<name>TRPA_SHIB3</name>
<protein>
    <recommendedName>
        <fullName evidence="1">Tryptophan synthase alpha chain</fullName>
        <ecNumber evidence="1">4.2.1.20</ecNumber>
    </recommendedName>
</protein>
<accession>B2U0F1</accession>